<reference key="1">
    <citation type="journal article" date="2004" name="Nat. Genet.">
        <title>Complete sequencing and characterization of 21,243 full-length human cDNAs.</title>
        <authorList>
            <person name="Ota T."/>
            <person name="Suzuki Y."/>
            <person name="Nishikawa T."/>
            <person name="Otsuki T."/>
            <person name="Sugiyama T."/>
            <person name="Irie R."/>
            <person name="Wakamatsu A."/>
            <person name="Hayashi K."/>
            <person name="Sato H."/>
            <person name="Nagai K."/>
            <person name="Kimura K."/>
            <person name="Makita H."/>
            <person name="Sekine M."/>
            <person name="Obayashi M."/>
            <person name="Nishi T."/>
            <person name="Shibahara T."/>
            <person name="Tanaka T."/>
            <person name="Ishii S."/>
            <person name="Yamamoto J."/>
            <person name="Saito K."/>
            <person name="Kawai Y."/>
            <person name="Isono Y."/>
            <person name="Nakamura Y."/>
            <person name="Nagahari K."/>
            <person name="Murakami K."/>
            <person name="Yasuda T."/>
            <person name="Iwayanagi T."/>
            <person name="Wagatsuma M."/>
            <person name="Shiratori A."/>
            <person name="Sudo H."/>
            <person name="Hosoiri T."/>
            <person name="Kaku Y."/>
            <person name="Kodaira H."/>
            <person name="Kondo H."/>
            <person name="Sugawara M."/>
            <person name="Takahashi M."/>
            <person name="Kanda K."/>
            <person name="Yokoi T."/>
            <person name="Furuya T."/>
            <person name="Kikkawa E."/>
            <person name="Omura Y."/>
            <person name="Abe K."/>
            <person name="Kamihara K."/>
            <person name="Katsuta N."/>
            <person name="Sato K."/>
            <person name="Tanikawa M."/>
            <person name="Yamazaki M."/>
            <person name="Ninomiya K."/>
            <person name="Ishibashi T."/>
            <person name="Yamashita H."/>
            <person name="Murakawa K."/>
            <person name="Fujimori K."/>
            <person name="Tanai H."/>
            <person name="Kimata M."/>
            <person name="Watanabe M."/>
            <person name="Hiraoka S."/>
            <person name="Chiba Y."/>
            <person name="Ishida S."/>
            <person name="Ono Y."/>
            <person name="Takiguchi S."/>
            <person name="Watanabe S."/>
            <person name="Yosida M."/>
            <person name="Hotuta T."/>
            <person name="Kusano J."/>
            <person name="Kanehori K."/>
            <person name="Takahashi-Fujii A."/>
            <person name="Hara H."/>
            <person name="Tanase T.-O."/>
            <person name="Nomura Y."/>
            <person name="Togiya S."/>
            <person name="Komai F."/>
            <person name="Hara R."/>
            <person name="Takeuchi K."/>
            <person name="Arita M."/>
            <person name="Imose N."/>
            <person name="Musashino K."/>
            <person name="Yuuki H."/>
            <person name="Oshima A."/>
            <person name="Sasaki N."/>
            <person name="Aotsuka S."/>
            <person name="Yoshikawa Y."/>
            <person name="Matsunawa H."/>
            <person name="Ichihara T."/>
            <person name="Shiohata N."/>
            <person name="Sano S."/>
            <person name="Moriya S."/>
            <person name="Momiyama H."/>
            <person name="Satoh N."/>
            <person name="Takami S."/>
            <person name="Terashima Y."/>
            <person name="Suzuki O."/>
            <person name="Nakagawa S."/>
            <person name="Senoh A."/>
            <person name="Mizoguchi H."/>
            <person name="Goto Y."/>
            <person name="Shimizu F."/>
            <person name="Wakebe H."/>
            <person name="Hishigaki H."/>
            <person name="Watanabe T."/>
            <person name="Sugiyama A."/>
            <person name="Takemoto M."/>
            <person name="Kawakami B."/>
            <person name="Yamazaki M."/>
            <person name="Watanabe K."/>
            <person name="Kumagai A."/>
            <person name="Itakura S."/>
            <person name="Fukuzumi Y."/>
            <person name="Fujimori Y."/>
            <person name="Komiyama M."/>
            <person name="Tashiro H."/>
            <person name="Tanigami A."/>
            <person name="Fujiwara T."/>
            <person name="Ono T."/>
            <person name="Yamada K."/>
            <person name="Fujii Y."/>
            <person name="Ozaki K."/>
            <person name="Hirao M."/>
            <person name="Ohmori Y."/>
            <person name="Kawabata A."/>
            <person name="Hikiji T."/>
            <person name="Kobatake N."/>
            <person name="Inagaki H."/>
            <person name="Ikema Y."/>
            <person name="Okamoto S."/>
            <person name="Okitani R."/>
            <person name="Kawakami T."/>
            <person name="Noguchi S."/>
            <person name="Itoh T."/>
            <person name="Shigeta K."/>
            <person name="Senba T."/>
            <person name="Matsumura K."/>
            <person name="Nakajima Y."/>
            <person name="Mizuno T."/>
            <person name="Morinaga M."/>
            <person name="Sasaki M."/>
            <person name="Togashi T."/>
            <person name="Oyama M."/>
            <person name="Hata H."/>
            <person name="Watanabe M."/>
            <person name="Komatsu T."/>
            <person name="Mizushima-Sugano J."/>
            <person name="Satoh T."/>
            <person name="Shirai Y."/>
            <person name="Takahashi Y."/>
            <person name="Nakagawa K."/>
            <person name="Okumura K."/>
            <person name="Nagase T."/>
            <person name="Nomura N."/>
            <person name="Kikuchi H."/>
            <person name="Masuho Y."/>
            <person name="Yamashita R."/>
            <person name="Nakai K."/>
            <person name="Yada T."/>
            <person name="Nakamura Y."/>
            <person name="Ohara O."/>
            <person name="Isogai T."/>
            <person name="Sugano S."/>
        </authorList>
    </citation>
    <scope>NUCLEOTIDE SEQUENCE [LARGE SCALE MRNA] (ISOFORM 1)</scope>
    <source>
        <tissue>Caudate nucleus</tissue>
    </source>
</reference>
<reference key="2">
    <citation type="journal article" date="2006" name="Nature">
        <title>The DNA sequence and biological annotation of human chromosome 1.</title>
        <authorList>
            <person name="Gregory S.G."/>
            <person name="Barlow K.F."/>
            <person name="McLay K.E."/>
            <person name="Kaul R."/>
            <person name="Swarbreck D."/>
            <person name="Dunham A."/>
            <person name="Scott C.E."/>
            <person name="Howe K.L."/>
            <person name="Woodfine K."/>
            <person name="Spencer C.C.A."/>
            <person name="Jones M.C."/>
            <person name="Gillson C."/>
            <person name="Searle S."/>
            <person name="Zhou Y."/>
            <person name="Kokocinski F."/>
            <person name="McDonald L."/>
            <person name="Evans R."/>
            <person name="Phillips K."/>
            <person name="Atkinson A."/>
            <person name="Cooper R."/>
            <person name="Jones C."/>
            <person name="Hall R.E."/>
            <person name="Andrews T.D."/>
            <person name="Lloyd C."/>
            <person name="Ainscough R."/>
            <person name="Almeida J.P."/>
            <person name="Ambrose K.D."/>
            <person name="Anderson F."/>
            <person name="Andrew R.W."/>
            <person name="Ashwell R.I.S."/>
            <person name="Aubin K."/>
            <person name="Babbage A.K."/>
            <person name="Bagguley C.L."/>
            <person name="Bailey J."/>
            <person name="Beasley H."/>
            <person name="Bethel G."/>
            <person name="Bird C.P."/>
            <person name="Bray-Allen S."/>
            <person name="Brown J.Y."/>
            <person name="Brown A.J."/>
            <person name="Buckley D."/>
            <person name="Burton J."/>
            <person name="Bye J."/>
            <person name="Carder C."/>
            <person name="Chapman J.C."/>
            <person name="Clark S.Y."/>
            <person name="Clarke G."/>
            <person name="Clee C."/>
            <person name="Cobley V."/>
            <person name="Collier R.E."/>
            <person name="Corby N."/>
            <person name="Coville G.J."/>
            <person name="Davies J."/>
            <person name="Deadman R."/>
            <person name="Dunn M."/>
            <person name="Earthrowl M."/>
            <person name="Ellington A.G."/>
            <person name="Errington H."/>
            <person name="Frankish A."/>
            <person name="Frankland J."/>
            <person name="French L."/>
            <person name="Garner P."/>
            <person name="Garnett J."/>
            <person name="Gay L."/>
            <person name="Ghori M.R.J."/>
            <person name="Gibson R."/>
            <person name="Gilby L.M."/>
            <person name="Gillett W."/>
            <person name="Glithero R.J."/>
            <person name="Grafham D.V."/>
            <person name="Griffiths C."/>
            <person name="Griffiths-Jones S."/>
            <person name="Grocock R."/>
            <person name="Hammond S."/>
            <person name="Harrison E.S.I."/>
            <person name="Hart E."/>
            <person name="Haugen E."/>
            <person name="Heath P.D."/>
            <person name="Holmes S."/>
            <person name="Holt K."/>
            <person name="Howden P.J."/>
            <person name="Hunt A.R."/>
            <person name="Hunt S.E."/>
            <person name="Hunter G."/>
            <person name="Isherwood J."/>
            <person name="James R."/>
            <person name="Johnson C."/>
            <person name="Johnson D."/>
            <person name="Joy A."/>
            <person name="Kay M."/>
            <person name="Kershaw J.K."/>
            <person name="Kibukawa M."/>
            <person name="Kimberley A.M."/>
            <person name="King A."/>
            <person name="Knights A.J."/>
            <person name="Lad H."/>
            <person name="Laird G."/>
            <person name="Lawlor S."/>
            <person name="Leongamornlert D.A."/>
            <person name="Lloyd D.M."/>
            <person name="Loveland J."/>
            <person name="Lovell J."/>
            <person name="Lush M.J."/>
            <person name="Lyne R."/>
            <person name="Martin S."/>
            <person name="Mashreghi-Mohammadi M."/>
            <person name="Matthews L."/>
            <person name="Matthews N.S.W."/>
            <person name="McLaren S."/>
            <person name="Milne S."/>
            <person name="Mistry S."/>
            <person name="Moore M.J.F."/>
            <person name="Nickerson T."/>
            <person name="O'Dell C.N."/>
            <person name="Oliver K."/>
            <person name="Palmeiri A."/>
            <person name="Palmer S.A."/>
            <person name="Parker A."/>
            <person name="Patel D."/>
            <person name="Pearce A.V."/>
            <person name="Peck A.I."/>
            <person name="Pelan S."/>
            <person name="Phelps K."/>
            <person name="Phillimore B.J."/>
            <person name="Plumb R."/>
            <person name="Rajan J."/>
            <person name="Raymond C."/>
            <person name="Rouse G."/>
            <person name="Saenphimmachak C."/>
            <person name="Sehra H.K."/>
            <person name="Sheridan E."/>
            <person name="Shownkeen R."/>
            <person name="Sims S."/>
            <person name="Skuce C.D."/>
            <person name="Smith M."/>
            <person name="Steward C."/>
            <person name="Subramanian S."/>
            <person name="Sycamore N."/>
            <person name="Tracey A."/>
            <person name="Tromans A."/>
            <person name="Van Helmond Z."/>
            <person name="Wall M."/>
            <person name="Wallis J.M."/>
            <person name="White S."/>
            <person name="Whitehead S.L."/>
            <person name="Wilkinson J.E."/>
            <person name="Willey D.L."/>
            <person name="Williams H."/>
            <person name="Wilming L."/>
            <person name="Wray P.W."/>
            <person name="Wu Z."/>
            <person name="Coulson A."/>
            <person name="Vaudin M."/>
            <person name="Sulston J.E."/>
            <person name="Durbin R.M."/>
            <person name="Hubbard T."/>
            <person name="Wooster R."/>
            <person name="Dunham I."/>
            <person name="Carter N.P."/>
            <person name="McVean G."/>
            <person name="Ross M.T."/>
            <person name="Harrow J."/>
            <person name="Olson M.V."/>
            <person name="Beck S."/>
            <person name="Rogers J."/>
            <person name="Bentley D.R."/>
        </authorList>
    </citation>
    <scope>NUCLEOTIDE SEQUENCE [LARGE SCALE GENOMIC DNA]</scope>
</reference>
<reference key="3">
    <citation type="submission" date="2005-07" db="EMBL/GenBank/DDBJ databases">
        <authorList>
            <person name="Mural R.J."/>
            <person name="Istrail S."/>
            <person name="Sutton G.G."/>
            <person name="Florea L."/>
            <person name="Halpern A.L."/>
            <person name="Mobarry C.M."/>
            <person name="Lippert R."/>
            <person name="Walenz B."/>
            <person name="Shatkay H."/>
            <person name="Dew I."/>
            <person name="Miller J.R."/>
            <person name="Flanigan M.J."/>
            <person name="Edwards N.J."/>
            <person name="Bolanos R."/>
            <person name="Fasulo D."/>
            <person name="Halldorsson B.V."/>
            <person name="Hannenhalli S."/>
            <person name="Turner R."/>
            <person name="Yooseph S."/>
            <person name="Lu F."/>
            <person name="Nusskern D.R."/>
            <person name="Shue B.C."/>
            <person name="Zheng X.H."/>
            <person name="Zhong F."/>
            <person name="Delcher A.L."/>
            <person name="Huson D.H."/>
            <person name="Kravitz S.A."/>
            <person name="Mouchard L."/>
            <person name="Reinert K."/>
            <person name="Remington K.A."/>
            <person name="Clark A.G."/>
            <person name="Waterman M.S."/>
            <person name="Eichler E.E."/>
            <person name="Adams M.D."/>
            <person name="Hunkapiller M.W."/>
            <person name="Myers E.W."/>
            <person name="Venter J.C."/>
        </authorList>
    </citation>
    <scope>NUCLEOTIDE SEQUENCE [LARGE SCALE GENOMIC DNA]</scope>
</reference>
<reference key="4">
    <citation type="journal article" date="2004" name="Genome Res.">
        <title>The status, quality, and expansion of the NIH full-length cDNA project: the Mammalian Gene Collection (MGC).</title>
        <authorList>
            <consortium name="The MGC Project Team"/>
        </authorList>
    </citation>
    <scope>NUCLEOTIDE SEQUENCE [LARGE SCALE MRNA] (ISOFORM 1)</scope>
    <source>
        <tissue>Testis</tissue>
    </source>
</reference>
<reference key="5">
    <citation type="journal article" date="2019" name="Genes (Basel)">
        <title>Ankrd45 Is a Novel Ankyrin Repeat Protein Required for Cell Proliferation.</title>
        <authorList>
            <person name="Kang Y."/>
            <person name="Xie H."/>
            <person name="Zhao C."/>
        </authorList>
    </citation>
    <scope>SUBCELLULAR LOCATION</scope>
    <scope>FUNCTION</scope>
</reference>
<feature type="chain" id="PRO_0000244574" description="Ankyrin repeat domain-containing protein 45">
    <location>
        <begin position="1"/>
        <end position="266"/>
    </location>
</feature>
<feature type="repeat" description="ANK 1">
    <location>
        <begin position="76"/>
        <end position="105"/>
    </location>
</feature>
<feature type="repeat" description="ANK 2">
    <location>
        <begin position="109"/>
        <end position="138"/>
    </location>
</feature>
<feature type="region of interest" description="Disordered" evidence="1">
    <location>
        <begin position="1"/>
        <end position="43"/>
    </location>
</feature>
<feature type="compositionally biased region" description="Acidic residues" evidence="1">
    <location>
        <begin position="1"/>
        <end position="11"/>
    </location>
</feature>
<feature type="compositionally biased region" description="Acidic residues" evidence="1">
    <location>
        <begin position="18"/>
        <end position="32"/>
    </location>
</feature>
<feature type="splice variant" id="VSP_059723" description="In isoform 2.">
    <original>M</original>
    <variation>MVTEEAGARVWVFLELM</variation>
    <location>
        <position position="1"/>
    </location>
</feature>
<protein>
    <recommendedName>
        <fullName evidence="3">Ankyrin repeat domain-containing protein 45</fullName>
    </recommendedName>
</protein>
<evidence type="ECO:0000256" key="1">
    <source>
        <dbReference type="SAM" id="MobiDB-lite"/>
    </source>
</evidence>
<evidence type="ECO:0000269" key="2">
    <source>
    </source>
</evidence>
<evidence type="ECO:0000305" key="3"/>
<evidence type="ECO:0000312" key="4">
    <source>
        <dbReference type="HGNC" id="HGNC:24786"/>
    </source>
</evidence>
<sequence length="266" mass="29977">MESEGPPESESSEFFSQQEEENEEEEAQEPEETGPKNPLLQPALTGDVEGLQKIFEDPENPHHEQAMQLLLEEDIVGRNLLYAACMAGQSDVIRALAKYGVNLNEKTTRGYTLLHCAAAWGRLETLKALVELDVDIEALNFREERARDVAARYSQTECVEFLDWADARLTLKKYIAKVSLAVTDTEKGSGKLLKEDKNTILSACRAKNEWLETHTEASINELFEQRQQLEDIVTPIFTKMTTPCQVKSAKSVTSHDQKRSQDDTSN</sequence>
<proteinExistence type="evidence at protein level"/>
<dbReference type="EMBL" id="AK127170">
    <property type="protein sequence ID" value="BAC86865.1"/>
    <property type="molecule type" value="mRNA"/>
</dbReference>
<dbReference type="EMBL" id="AL139142">
    <property type="status" value="NOT_ANNOTATED_CDS"/>
    <property type="molecule type" value="Genomic_DNA"/>
</dbReference>
<dbReference type="EMBL" id="BX248409">
    <property type="status" value="NOT_ANNOTATED_CDS"/>
    <property type="molecule type" value="Genomic_DNA"/>
</dbReference>
<dbReference type="EMBL" id="CH471067">
    <property type="protein sequence ID" value="EAW90950.1"/>
    <property type="molecule type" value="Genomic_DNA"/>
</dbReference>
<dbReference type="EMBL" id="BC126353">
    <property type="protein sequence ID" value="AAI26354.1"/>
    <property type="molecule type" value="mRNA"/>
</dbReference>
<dbReference type="EMBL" id="BC126355">
    <property type="protein sequence ID" value="AAI26356.1"/>
    <property type="molecule type" value="mRNA"/>
</dbReference>
<dbReference type="CCDS" id="CCDS1309.1">
    <molecule id="Q5TZF3-2"/>
</dbReference>
<dbReference type="RefSeq" id="NP_940895.1">
    <molecule id="Q5TZF3-2"/>
    <property type="nucleotide sequence ID" value="NM_198493.3"/>
</dbReference>
<dbReference type="RefSeq" id="XP_011507768.1">
    <property type="nucleotide sequence ID" value="XM_011509466.2"/>
</dbReference>
<dbReference type="RefSeq" id="XP_011507769.1">
    <property type="nucleotide sequence ID" value="XM_011509467.1"/>
</dbReference>
<dbReference type="RefSeq" id="XP_011507770.1">
    <property type="nucleotide sequence ID" value="XM_011509468.1"/>
</dbReference>
<dbReference type="RefSeq" id="XP_011507772.1">
    <molecule id="Q5TZF3-2"/>
    <property type="nucleotide sequence ID" value="XM_011509470.3"/>
</dbReference>
<dbReference type="RefSeq" id="XP_024302395.1">
    <molecule id="Q5TZF3-2"/>
    <property type="nucleotide sequence ID" value="XM_024446627.2"/>
</dbReference>
<dbReference type="RefSeq" id="XP_047275154.1">
    <molecule id="Q5TZF3-2"/>
    <property type="nucleotide sequence ID" value="XM_047419198.1"/>
</dbReference>
<dbReference type="RefSeq" id="XP_054192221.1">
    <molecule id="Q5TZF3-2"/>
    <property type="nucleotide sequence ID" value="XM_054336246.1"/>
</dbReference>
<dbReference type="RefSeq" id="XP_054192222.1">
    <molecule id="Q5TZF3-2"/>
    <property type="nucleotide sequence ID" value="XM_054336247.1"/>
</dbReference>
<dbReference type="RefSeq" id="XP_054192223.1">
    <molecule id="Q5TZF3-2"/>
    <property type="nucleotide sequence ID" value="XM_054336248.1"/>
</dbReference>
<dbReference type="SMR" id="Q5TZF3"/>
<dbReference type="BioGRID" id="130881">
    <property type="interactions" value="6"/>
</dbReference>
<dbReference type="FunCoup" id="Q5TZF3">
    <property type="interactions" value="3"/>
</dbReference>
<dbReference type="IntAct" id="Q5TZF3">
    <property type="interactions" value="7"/>
</dbReference>
<dbReference type="STRING" id="9606.ENSP00000331268"/>
<dbReference type="iPTMnet" id="Q5TZF3"/>
<dbReference type="PhosphoSitePlus" id="Q5TZF3"/>
<dbReference type="BioMuta" id="ANKRD45"/>
<dbReference type="DMDM" id="74756674"/>
<dbReference type="MassIVE" id="Q5TZF3"/>
<dbReference type="PaxDb" id="9606-ENSP00000331268"/>
<dbReference type="PeptideAtlas" id="Q5TZF3"/>
<dbReference type="ProteomicsDB" id="65217">
    <molecule id="Q5TZF3-1"/>
</dbReference>
<dbReference type="ProteomicsDB" id="65218">
    <molecule id="Q5TZF3-2"/>
</dbReference>
<dbReference type="Antibodypedia" id="34395">
    <property type="antibodies" value="82 antibodies from 17 providers"/>
</dbReference>
<dbReference type="DNASU" id="339416"/>
<dbReference type="Ensembl" id="ENST00000333279.3">
    <molecule id="Q5TZF3-2"/>
    <property type="protein sequence ID" value="ENSP00000331268.2"/>
    <property type="gene ID" value="ENSG00000183831.7"/>
</dbReference>
<dbReference type="GeneID" id="339416"/>
<dbReference type="KEGG" id="hsa:339416"/>
<dbReference type="MANE-Select" id="ENST00000333279.3">
    <property type="protein sequence ID" value="ENSP00000331268.2"/>
    <property type="RefSeq nucleotide sequence ID" value="NM_198493.3"/>
    <property type="RefSeq protein sequence ID" value="NP_940895.1"/>
</dbReference>
<dbReference type="UCSC" id="uc001gja.2">
    <molecule id="Q5TZF3-2"/>
    <property type="organism name" value="human"/>
</dbReference>
<dbReference type="AGR" id="HGNC:24786"/>
<dbReference type="CTD" id="339416"/>
<dbReference type="DisGeNET" id="339416"/>
<dbReference type="GeneCards" id="ANKRD45"/>
<dbReference type="HGNC" id="HGNC:24786">
    <property type="gene designation" value="ANKRD45"/>
</dbReference>
<dbReference type="HPA" id="ENSG00000183831">
    <property type="expression patterns" value="Tissue enhanced (fallopian tube, parathyroid gland, testis)"/>
</dbReference>
<dbReference type="MIM" id="618712">
    <property type="type" value="gene"/>
</dbReference>
<dbReference type="neXtProt" id="NX_Q5TZF3"/>
<dbReference type="OpenTargets" id="ENSG00000183831"/>
<dbReference type="PharmGKB" id="PA142672612"/>
<dbReference type="VEuPathDB" id="HostDB:ENSG00000183831"/>
<dbReference type="eggNOG" id="KOG0100">
    <property type="taxonomic scope" value="Eukaryota"/>
</dbReference>
<dbReference type="GeneTree" id="ENSGT00390000008829"/>
<dbReference type="HOGENOM" id="CLU_087014_0_0_1"/>
<dbReference type="InParanoid" id="Q5TZF3"/>
<dbReference type="OMA" id="ATPRKFW"/>
<dbReference type="OrthoDB" id="194358at2759"/>
<dbReference type="PAN-GO" id="Q5TZF3">
    <property type="GO annotations" value="0 GO annotations based on evolutionary models"/>
</dbReference>
<dbReference type="PhylomeDB" id="Q5TZF3"/>
<dbReference type="TreeFam" id="TF329503"/>
<dbReference type="PathwayCommons" id="Q5TZF3"/>
<dbReference type="SignaLink" id="Q5TZF3"/>
<dbReference type="BioGRID-ORCS" id="339416">
    <property type="hits" value="7 hits in 1147 CRISPR screens"/>
</dbReference>
<dbReference type="ChiTaRS" id="ANKRD45">
    <property type="organism name" value="human"/>
</dbReference>
<dbReference type="GenomeRNAi" id="339416"/>
<dbReference type="Pharos" id="Q5TZF3">
    <property type="development level" value="Tbio"/>
</dbReference>
<dbReference type="PRO" id="PR:Q5TZF3"/>
<dbReference type="Proteomes" id="UP000005640">
    <property type="component" value="Chromosome 1"/>
</dbReference>
<dbReference type="RNAct" id="Q5TZF3">
    <property type="molecule type" value="protein"/>
</dbReference>
<dbReference type="Bgee" id="ENSG00000183831">
    <property type="expression patterns" value="Expressed in sperm and 89 other cell types or tissues"/>
</dbReference>
<dbReference type="GO" id="GO:0005813">
    <property type="term" value="C:centrosome"/>
    <property type="evidence" value="ECO:0000314"/>
    <property type="project" value="HPA"/>
</dbReference>
<dbReference type="GO" id="GO:0032154">
    <property type="term" value="C:cleavage furrow"/>
    <property type="evidence" value="ECO:0000314"/>
    <property type="project" value="UniProtKB"/>
</dbReference>
<dbReference type="GO" id="GO:0005737">
    <property type="term" value="C:cytoplasm"/>
    <property type="evidence" value="ECO:0000314"/>
    <property type="project" value="UniProtKB"/>
</dbReference>
<dbReference type="GO" id="GO:0005829">
    <property type="term" value="C:cytosol"/>
    <property type="evidence" value="ECO:0000314"/>
    <property type="project" value="HPA"/>
</dbReference>
<dbReference type="GO" id="GO:0090543">
    <property type="term" value="C:Flemming body"/>
    <property type="evidence" value="ECO:0007669"/>
    <property type="project" value="UniProtKB-SubCell"/>
</dbReference>
<dbReference type="GO" id="GO:0030496">
    <property type="term" value="C:midbody"/>
    <property type="evidence" value="ECO:0000314"/>
    <property type="project" value="UniProtKB"/>
</dbReference>
<dbReference type="GO" id="GO:0005886">
    <property type="term" value="C:plasma membrane"/>
    <property type="evidence" value="ECO:0000314"/>
    <property type="project" value="HPA"/>
</dbReference>
<dbReference type="GO" id="GO:0008283">
    <property type="term" value="P:cell population proliferation"/>
    <property type="evidence" value="ECO:0000315"/>
    <property type="project" value="UniProtKB"/>
</dbReference>
<dbReference type="Gene3D" id="1.20.1270.10">
    <property type="match status" value="1"/>
</dbReference>
<dbReference type="Gene3D" id="1.25.40.20">
    <property type="entry name" value="Ankyrin repeat-containing domain"/>
    <property type="match status" value="1"/>
</dbReference>
<dbReference type="InterPro" id="IPR050776">
    <property type="entry name" value="Ank_Repeat/CDKN_Inhibitor"/>
</dbReference>
<dbReference type="InterPro" id="IPR002110">
    <property type="entry name" value="Ankyrin_rpt"/>
</dbReference>
<dbReference type="InterPro" id="IPR036770">
    <property type="entry name" value="Ankyrin_rpt-contain_sf"/>
</dbReference>
<dbReference type="InterPro" id="IPR029048">
    <property type="entry name" value="HSP70_C_sf"/>
</dbReference>
<dbReference type="PANTHER" id="PTHR24201">
    <property type="entry name" value="ANK_REP_REGION DOMAIN-CONTAINING PROTEIN"/>
    <property type="match status" value="1"/>
</dbReference>
<dbReference type="PANTHER" id="PTHR24201:SF15">
    <property type="entry name" value="ANKYRIN REPEAT DOMAIN-CONTAINING PROTEIN 66"/>
    <property type="match status" value="1"/>
</dbReference>
<dbReference type="Pfam" id="PF12796">
    <property type="entry name" value="Ank_2"/>
    <property type="match status" value="1"/>
</dbReference>
<dbReference type="SMART" id="SM00248">
    <property type="entry name" value="ANK"/>
    <property type="match status" value="2"/>
</dbReference>
<dbReference type="SUPFAM" id="SSF48403">
    <property type="entry name" value="Ankyrin repeat"/>
    <property type="match status" value="1"/>
</dbReference>
<dbReference type="SUPFAM" id="SSF100934">
    <property type="entry name" value="Heat shock protein 70kD (HSP70), C-terminal subdomain"/>
    <property type="match status" value="1"/>
</dbReference>
<dbReference type="PROSITE" id="PS50297">
    <property type="entry name" value="ANK_REP_REGION"/>
    <property type="match status" value="1"/>
</dbReference>
<dbReference type="PROSITE" id="PS50088">
    <property type="entry name" value="ANK_REPEAT"/>
    <property type="match status" value="2"/>
</dbReference>
<name>ANR45_HUMAN</name>
<keyword id="KW-0025">Alternative splicing</keyword>
<keyword id="KW-0040">ANK repeat</keyword>
<keyword id="KW-0963">Cytoplasm</keyword>
<keyword id="KW-1267">Proteomics identification</keyword>
<keyword id="KW-1185">Reference proteome</keyword>
<keyword id="KW-0677">Repeat</keyword>
<organism>
    <name type="scientific">Homo sapiens</name>
    <name type="common">Human</name>
    <dbReference type="NCBI Taxonomy" id="9606"/>
    <lineage>
        <taxon>Eukaryota</taxon>
        <taxon>Metazoa</taxon>
        <taxon>Chordata</taxon>
        <taxon>Craniata</taxon>
        <taxon>Vertebrata</taxon>
        <taxon>Euteleostomi</taxon>
        <taxon>Mammalia</taxon>
        <taxon>Eutheria</taxon>
        <taxon>Euarchontoglires</taxon>
        <taxon>Primates</taxon>
        <taxon>Haplorrhini</taxon>
        <taxon>Catarrhini</taxon>
        <taxon>Hominidae</taxon>
        <taxon>Homo</taxon>
    </lineage>
</organism>
<accession>Q5TZF3</accession>
<accession>A1A4G2</accession>
<accession>Q6ZST1</accession>
<gene>
    <name evidence="4" type="primary">ANKRD45</name>
</gene>
<comment type="function">
    <text evidence="2">May play a role during cell division.</text>
</comment>
<comment type="interaction">
    <interactant intactId="EBI-10247255">
        <id>Q5TZF3</id>
    </interactant>
    <interactant intactId="EBI-10239285">
        <id>Q96E03</id>
        <label>MAGEA2B</label>
    </interactant>
    <organismsDiffer>false</organismsDiffer>
    <experiments>3</experiments>
</comment>
<comment type="interaction">
    <interactant intactId="EBI-22011535">
        <id>Q5TZF3-1</id>
    </interactant>
    <interactant intactId="EBI-466029">
        <id>P42858</id>
        <label>HTT</label>
    </interactant>
    <organismsDiffer>false</organismsDiffer>
    <experiments>3</experiments>
</comment>
<comment type="interaction">
    <interactant intactId="EBI-22011535">
        <id>Q5TZF3-1</id>
    </interactant>
    <interactant intactId="EBI-12039345">
        <id>Q9UBR4-2</id>
        <label>LHX3</label>
    </interactant>
    <organismsDiffer>false</organismsDiffer>
    <experiments>3</experiments>
</comment>
<comment type="interaction">
    <interactant intactId="EBI-22011535">
        <id>Q5TZF3-1</id>
    </interactant>
    <interactant intactId="EBI-5650739">
        <id>P43356</id>
        <label>MAGEA2B</label>
    </interactant>
    <organismsDiffer>false</organismsDiffer>
    <experiments>3</experiments>
</comment>
<comment type="interaction">
    <interactant intactId="EBI-22011535">
        <id>Q5TZF3-1</id>
    </interactant>
    <interactant intactId="EBI-748974">
        <id>Q96CV9</id>
        <label>OPTN</label>
    </interactant>
    <organismsDiffer>false</organismsDiffer>
    <experiments>3</experiments>
</comment>
<comment type="subcellular location">
    <subcellularLocation>
        <location evidence="2">Cytoplasm</location>
    </subcellularLocation>
    <subcellularLocation>
        <location evidence="2">Midbody</location>
        <location evidence="2">Midbody ring</location>
    </subcellularLocation>
    <subcellularLocation>
        <location evidence="2">Cleavage furrow</location>
    </subcellularLocation>
    <text evidence="2">Distribution is highly dynamic during mitosis. Not detected during interphase, localized to cytoplasm during metaphase, to cleavage furrow during anaphase and telophase, and to midbody ring during cytokinesis.</text>
</comment>
<comment type="alternative products">
    <event type="alternative splicing"/>
    <isoform>
        <id>Q5TZF3-2</id>
        <name>1</name>
        <sequence type="displayed"/>
    </isoform>
    <isoform>
        <id>Q5TZF3-1</id>
        <name>2</name>
        <sequence type="described" ref="VSP_059723"/>
    </isoform>
</comment>